<evidence type="ECO:0000255" key="1">
    <source>
        <dbReference type="HAMAP-Rule" id="MF_00736"/>
    </source>
</evidence>
<evidence type="ECO:0000256" key="2">
    <source>
        <dbReference type="SAM" id="MobiDB-lite"/>
    </source>
</evidence>
<evidence type="ECO:0000305" key="3"/>
<keyword id="KW-1185">Reference proteome</keyword>
<keyword id="KW-0687">Ribonucleoprotein</keyword>
<keyword id="KW-0689">Ribosomal protein</keyword>
<keyword id="KW-0694">RNA-binding</keyword>
<keyword id="KW-0699">rRNA-binding</keyword>
<organism>
    <name type="scientific">Thermoplasma acidophilum (strain ATCC 25905 / DSM 1728 / JCM 9062 / NBRC 15155 / AMRC-C165)</name>
    <dbReference type="NCBI Taxonomy" id="273075"/>
    <lineage>
        <taxon>Archaea</taxon>
        <taxon>Methanobacteriati</taxon>
        <taxon>Thermoplasmatota</taxon>
        <taxon>Thermoplasmata</taxon>
        <taxon>Thermoplasmatales</taxon>
        <taxon>Thermoplasmataceae</taxon>
        <taxon>Thermoplasma</taxon>
    </lineage>
</organism>
<reference key="1">
    <citation type="journal article" date="2000" name="Nature">
        <title>The genome sequence of the thermoacidophilic scavenger Thermoplasma acidophilum.</title>
        <authorList>
            <person name="Ruepp A."/>
            <person name="Graml W."/>
            <person name="Santos-Martinez M.-L."/>
            <person name="Koretke K.K."/>
            <person name="Volker C."/>
            <person name="Mewes H.-W."/>
            <person name="Frishman D."/>
            <person name="Stocker S."/>
            <person name="Lupas A.N."/>
            <person name="Baumeister W."/>
        </authorList>
    </citation>
    <scope>NUCLEOTIDE SEQUENCE [LARGE SCALE GENOMIC DNA]</scope>
    <source>
        <strain>ATCC 25905 / DSM 1728 / JCM 9062 / NBRC 15155 / AMRC-C165</strain>
    </source>
</reference>
<protein>
    <recommendedName>
        <fullName evidence="1">Large ribosomal subunit protein uL11</fullName>
    </recommendedName>
    <alternativeName>
        <fullName evidence="3">50S ribosomal protein L11</fullName>
    </alternativeName>
</protein>
<dbReference type="EMBL" id="AL445064">
    <property type="protein sequence ID" value="CAC11505.1"/>
    <property type="status" value="ALT_INIT"/>
    <property type="molecule type" value="Genomic_DNA"/>
</dbReference>
<dbReference type="RefSeq" id="WP_048161546.1">
    <property type="nucleotide sequence ID" value="NC_002578.1"/>
</dbReference>
<dbReference type="SMR" id="Q9HL70"/>
<dbReference type="FunCoup" id="Q9HL70">
    <property type="interactions" value="159"/>
</dbReference>
<dbReference type="STRING" id="273075.gene:9571579"/>
<dbReference type="PaxDb" id="273075-Ta0361"/>
<dbReference type="EnsemblBacteria" id="CAC11505">
    <property type="protein sequence ID" value="CAC11505"/>
    <property type="gene ID" value="CAC11505"/>
</dbReference>
<dbReference type="KEGG" id="tac:Ta0361"/>
<dbReference type="eggNOG" id="arCOG04372">
    <property type="taxonomic scope" value="Archaea"/>
</dbReference>
<dbReference type="HOGENOM" id="CLU_074237_4_0_2"/>
<dbReference type="InParanoid" id="Q9HL70"/>
<dbReference type="OrthoDB" id="8842at2157"/>
<dbReference type="Proteomes" id="UP000001024">
    <property type="component" value="Chromosome"/>
</dbReference>
<dbReference type="GO" id="GO:0015934">
    <property type="term" value="C:large ribosomal subunit"/>
    <property type="evidence" value="ECO:0007669"/>
    <property type="project" value="TreeGrafter"/>
</dbReference>
<dbReference type="GO" id="GO:0070180">
    <property type="term" value="F:large ribosomal subunit rRNA binding"/>
    <property type="evidence" value="ECO:0007669"/>
    <property type="project" value="UniProtKB-UniRule"/>
</dbReference>
<dbReference type="GO" id="GO:0003735">
    <property type="term" value="F:structural constituent of ribosome"/>
    <property type="evidence" value="ECO:0007669"/>
    <property type="project" value="InterPro"/>
</dbReference>
<dbReference type="GO" id="GO:0006412">
    <property type="term" value="P:translation"/>
    <property type="evidence" value="ECO:0007669"/>
    <property type="project" value="UniProtKB-UniRule"/>
</dbReference>
<dbReference type="CDD" id="cd00349">
    <property type="entry name" value="Ribosomal_L11"/>
    <property type="match status" value="1"/>
</dbReference>
<dbReference type="FunFam" id="3.30.1550.10:FF:000007">
    <property type="entry name" value="50S ribosomal protein L11"/>
    <property type="match status" value="1"/>
</dbReference>
<dbReference type="Gene3D" id="1.10.10.250">
    <property type="entry name" value="Ribosomal protein L11, C-terminal domain"/>
    <property type="match status" value="1"/>
</dbReference>
<dbReference type="Gene3D" id="3.30.1550.10">
    <property type="entry name" value="Ribosomal protein L11/L12, N-terminal domain"/>
    <property type="match status" value="1"/>
</dbReference>
<dbReference type="HAMAP" id="MF_00736">
    <property type="entry name" value="Ribosomal_uL11"/>
    <property type="match status" value="1"/>
</dbReference>
<dbReference type="InterPro" id="IPR000911">
    <property type="entry name" value="Ribosomal_uL11"/>
</dbReference>
<dbReference type="InterPro" id="IPR020783">
    <property type="entry name" value="Ribosomal_uL11_C"/>
</dbReference>
<dbReference type="InterPro" id="IPR036769">
    <property type="entry name" value="Ribosomal_uL11_C_sf"/>
</dbReference>
<dbReference type="InterPro" id="IPR020784">
    <property type="entry name" value="Ribosomal_uL11_N"/>
</dbReference>
<dbReference type="InterPro" id="IPR036796">
    <property type="entry name" value="Ribosomal_uL11_N_sf"/>
</dbReference>
<dbReference type="NCBIfam" id="NF002232">
    <property type="entry name" value="PRK01143.1"/>
    <property type="match status" value="1"/>
</dbReference>
<dbReference type="PANTHER" id="PTHR11661">
    <property type="entry name" value="60S RIBOSOMAL PROTEIN L12"/>
    <property type="match status" value="1"/>
</dbReference>
<dbReference type="PANTHER" id="PTHR11661:SF1">
    <property type="entry name" value="LARGE RIBOSOMAL SUBUNIT PROTEIN UL11M"/>
    <property type="match status" value="1"/>
</dbReference>
<dbReference type="Pfam" id="PF00298">
    <property type="entry name" value="Ribosomal_L11"/>
    <property type="match status" value="1"/>
</dbReference>
<dbReference type="Pfam" id="PF03946">
    <property type="entry name" value="Ribosomal_L11_N"/>
    <property type="match status" value="1"/>
</dbReference>
<dbReference type="SMART" id="SM00649">
    <property type="entry name" value="RL11"/>
    <property type="match status" value="1"/>
</dbReference>
<dbReference type="SUPFAM" id="SSF54747">
    <property type="entry name" value="Ribosomal L11/L12e N-terminal domain"/>
    <property type="match status" value="1"/>
</dbReference>
<dbReference type="SUPFAM" id="SSF46906">
    <property type="entry name" value="Ribosomal protein L11, C-terminal domain"/>
    <property type="match status" value="1"/>
</dbReference>
<feature type="chain" id="PRO_0000104450" description="Large ribosomal subunit protein uL11">
    <location>
        <begin position="1"/>
        <end position="156"/>
    </location>
</feature>
<feature type="region of interest" description="Disordered" evidence="2">
    <location>
        <begin position="1"/>
        <end position="20"/>
    </location>
</feature>
<gene>
    <name evidence="1" type="primary">rpl11</name>
    <name type="ordered locus">Ta0361</name>
</gene>
<accession>Q9HL70</accession>
<proteinExistence type="inferred from homology"/>
<comment type="function">
    <text evidence="1">Forms part of the ribosomal stalk which helps the ribosome interact with GTP-bound translation factors.</text>
</comment>
<comment type="subunit">
    <text evidence="1">Part of the ribosomal stalk of the 50S ribosomal subunit. Interacts with L10 and the large rRNA to form the base of the stalk. L10 forms an elongated spine to which L12 dimers bind in a sequential fashion forming a multimeric L10(L12)X complex.</text>
</comment>
<comment type="similarity">
    <text evidence="1">Belongs to the universal ribosomal protein uL11 family.</text>
</comment>
<comment type="sequence caution" evidence="3">
    <conflict type="erroneous initiation">
        <sequence resource="EMBL-CDS" id="CAC11505"/>
    </conflict>
</comment>
<sequence>MAQSVKTMVEGGKATTGPPIGPALGPLGLNVAQVVKEINEKTKEFQGMRVPVTITVVDPETKKYEITVGIPPTSALLKKKLGIEKGAAKRKEAIAGNATLDQIVDVAKTKMASMLASDLKAATLEVLGTCVSMGINVDGKDPKEVQRQIKAGEISI</sequence>
<name>RL11_THEAC</name>